<evidence type="ECO:0000250" key="1">
    <source>
        <dbReference type="UniProtKB" id="P10905"/>
    </source>
</evidence>
<evidence type="ECO:0000255" key="2"/>
<evidence type="ECO:0000255" key="3">
    <source>
        <dbReference type="PROSITE-ProRule" id="PRU00441"/>
    </source>
</evidence>
<evidence type="ECO:0000305" key="4"/>
<feature type="chain" id="PRO_0000292831" description="sn-glycerol-3-phosphate transport system permease protein UgpA">
    <location>
        <begin position="1"/>
        <end position="295"/>
    </location>
</feature>
<feature type="topological domain" description="Cytoplasmic" evidence="2">
    <location>
        <begin position="1"/>
        <end position="11"/>
    </location>
</feature>
<feature type="transmembrane region" description="Helical" evidence="3">
    <location>
        <begin position="12"/>
        <end position="32"/>
    </location>
</feature>
<feature type="topological domain" description="Periplasmic" evidence="2">
    <location>
        <begin position="33"/>
        <end position="80"/>
    </location>
</feature>
<feature type="transmembrane region" description="Helical" evidence="3">
    <location>
        <begin position="81"/>
        <end position="101"/>
    </location>
</feature>
<feature type="topological domain" description="Cytoplasmic" evidence="2">
    <location>
        <begin position="102"/>
        <end position="109"/>
    </location>
</feature>
<feature type="transmembrane region" description="Helical" evidence="3">
    <location>
        <begin position="110"/>
        <end position="130"/>
    </location>
</feature>
<feature type="topological domain" description="Periplasmic" evidence="2">
    <location>
        <begin position="131"/>
        <end position="156"/>
    </location>
</feature>
<feature type="transmembrane region" description="Helical" evidence="3">
    <location>
        <begin position="157"/>
        <end position="177"/>
    </location>
</feature>
<feature type="topological domain" description="Cytoplasmic" evidence="2">
    <location>
        <begin position="178"/>
        <end position="207"/>
    </location>
</feature>
<feature type="transmembrane region" description="Helical" evidence="3">
    <location>
        <begin position="208"/>
        <end position="228"/>
    </location>
</feature>
<feature type="topological domain" description="Periplasmic" evidence="2">
    <location>
        <begin position="229"/>
        <end position="262"/>
    </location>
</feature>
<feature type="transmembrane region" description="Helical" evidence="3">
    <location>
        <begin position="263"/>
        <end position="283"/>
    </location>
</feature>
<feature type="topological domain" description="Cytoplasmic" evidence="2">
    <location>
        <begin position="284"/>
        <end position="295"/>
    </location>
</feature>
<feature type="domain" description="ABC transmembrane type-1" evidence="3">
    <location>
        <begin position="76"/>
        <end position="284"/>
    </location>
</feature>
<dbReference type="EMBL" id="CP000034">
    <property type="protein sequence ID" value="ABB63571.1"/>
    <property type="molecule type" value="Genomic_DNA"/>
</dbReference>
<dbReference type="RefSeq" id="WP_000099273.1">
    <property type="nucleotide sequence ID" value="NC_007606.1"/>
</dbReference>
<dbReference type="RefSeq" id="YP_405062.1">
    <property type="nucleotide sequence ID" value="NC_007606.1"/>
</dbReference>
<dbReference type="SMR" id="Q32AT4"/>
<dbReference type="STRING" id="300267.SDY_3600"/>
<dbReference type="EnsemblBacteria" id="ABB63571">
    <property type="protein sequence ID" value="ABB63571"/>
    <property type="gene ID" value="SDY_3600"/>
</dbReference>
<dbReference type="KEGG" id="sdy:SDY_3600"/>
<dbReference type="PATRIC" id="fig|300267.13.peg.4275"/>
<dbReference type="HOGENOM" id="CLU_016047_0_2_6"/>
<dbReference type="Proteomes" id="UP000002716">
    <property type="component" value="Chromosome"/>
</dbReference>
<dbReference type="GO" id="GO:0005886">
    <property type="term" value="C:plasma membrane"/>
    <property type="evidence" value="ECO:0007669"/>
    <property type="project" value="UniProtKB-SubCell"/>
</dbReference>
<dbReference type="GO" id="GO:0055085">
    <property type="term" value="P:transmembrane transport"/>
    <property type="evidence" value="ECO:0007669"/>
    <property type="project" value="InterPro"/>
</dbReference>
<dbReference type="CDD" id="cd06261">
    <property type="entry name" value="TM_PBP2"/>
    <property type="match status" value="1"/>
</dbReference>
<dbReference type="FunFam" id="1.10.3720.10:FF:000028">
    <property type="entry name" value="sn-glycerol-3-phosphate ABC transporter permease UgpA"/>
    <property type="match status" value="1"/>
</dbReference>
<dbReference type="Gene3D" id="1.10.3720.10">
    <property type="entry name" value="MetI-like"/>
    <property type="match status" value="1"/>
</dbReference>
<dbReference type="InterPro" id="IPR000515">
    <property type="entry name" value="MetI-like"/>
</dbReference>
<dbReference type="InterPro" id="IPR035906">
    <property type="entry name" value="MetI-like_sf"/>
</dbReference>
<dbReference type="InterPro" id="IPR050809">
    <property type="entry name" value="UgpAE/MalFG_permease"/>
</dbReference>
<dbReference type="NCBIfam" id="NF007852">
    <property type="entry name" value="PRK10561.1"/>
    <property type="match status" value="1"/>
</dbReference>
<dbReference type="PANTHER" id="PTHR43227">
    <property type="entry name" value="BLL4140 PROTEIN"/>
    <property type="match status" value="1"/>
</dbReference>
<dbReference type="PANTHER" id="PTHR43227:SF9">
    <property type="entry name" value="SN-GLYCEROL-3-PHOSPHATE TRANSPORT SYSTEM PERMEASE PROTEIN UGPA"/>
    <property type="match status" value="1"/>
</dbReference>
<dbReference type="Pfam" id="PF00528">
    <property type="entry name" value="BPD_transp_1"/>
    <property type="match status" value="1"/>
</dbReference>
<dbReference type="SUPFAM" id="SSF161098">
    <property type="entry name" value="MetI-like"/>
    <property type="match status" value="1"/>
</dbReference>
<dbReference type="PROSITE" id="PS50928">
    <property type="entry name" value="ABC_TM1"/>
    <property type="match status" value="1"/>
</dbReference>
<proteinExistence type="inferred from homology"/>
<organism>
    <name type="scientific">Shigella dysenteriae serotype 1 (strain Sd197)</name>
    <dbReference type="NCBI Taxonomy" id="300267"/>
    <lineage>
        <taxon>Bacteria</taxon>
        <taxon>Pseudomonadati</taxon>
        <taxon>Pseudomonadota</taxon>
        <taxon>Gammaproteobacteria</taxon>
        <taxon>Enterobacterales</taxon>
        <taxon>Enterobacteriaceae</taxon>
        <taxon>Shigella</taxon>
    </lineage>
</organism>
<protein>
    <recommendedName>
        <fullName evidence="1">sn-glycerol-3-phosphate transport system permease protein UgpA</fullName>
    </recommendedName>
</protein>
<keyword id="KW-0997">Cell inner membrane</keyword>
<keyword id="KW-1003">Cell membrane</keyword>
<keyword id="KW-0472">Membrane</keyword>
<keyword id="KW-1185">Reference proteome</keyword>
<keyword id="KW-0812">Transmembrane</keyword>
<keyword id="KW-1133">Transmembrane helix</keyword>
<keyword id="KW-0813">Transport</keyword>
<reference key="1">
    <citation type="journal article" date="2005" name="Nucleic Acids Res.">
        <title>Genome dynamics and diversity of Shigella species, the etiologic agents of bacillary dysentery.</title>
        <authorList>
            <person name="Yang F."/>
            <person name="Yang J."/>
            <person name="Zhang X."/>
            <person name="Chen L."/>
            <person name="Jiang Y."/>
            <person name="Yan Y."/>
            <person name="Tang X."/>
            <person name="Wang J."/>
            <person name="Xiong Z."/>
            <person name="Dong J."/>
            <person name="Xue Y."/>
            <person name="Zhu Y."/>
            <person name="Xu X."/>
            <person name="Sun L."/>
            <person name="Chen S."/>
            <person name="Nie H."/>
            <person name="Peng J."/>
            <person name="Xu J."/>
            <person name="Wang Y."/>
            <person name="Yuan Z."/>
            <person name="Wen Y."/>
            <person name="Yao Z."/>
            <person name="Shen Y."/>
            <person name="Qiang B."/>
            <person name="Hou Y."/>
            <person name="Yu J."/>
            <person name="Jin Q."/>
        </authorList>
    </citation>
    <scope>NUCLEOTIDE SEQUENCE [LARGE SCALE GENOMIC DNA]</scope>
    <source>
        <strain>Sd197</strain>
    </source>
</reference>
<sequence length="295" mass="33274">MSSSRPVFRSRWLPYLLVAPQLIITVIFFIWPAGEALWYSLQSVDPFGFSSQFVGLDNFVALFHDSYYIDSFWTTIKFSTFVTVSGLLVSLFFAALVEYIVRGSRFYQTLMLLPYAVAPAVAAVLWIFLFNPGRGLITHFLAEFGYDWNHAQNSGQAMFLVVFASVWKQISYNFLFFYAALQSIPRSLIEAAAIDGVGPIRRFFKIALPLIAPVSFFLLVVNLVYAFFDTFPVIDAATSGGPVQAITTLIYKIYREGFTGLDLASSAAQSVVLMFLVIVLTVVQFRYVESKVRYQ</sequence>
<name>UGPA_SHIDS</name>
<comment type="function">
    <text evidence="1">Part of the ABC transporter complex UgpBAEC involved in sn-glycerol-3-phosphate (G3P) import. Probably responsible for the translocation of the substrate across the membrane.</text>
</comment>
<comment type="subunit">
    <text evidence="1">The complex is composed of two ATP-binding proteins (UgpC), two transmembrane proteins (UgpA and UgpE) and a solute-binding protein (UgpB).</text>
</comment>
<comment type="subcellular location">
    <subcellularLocation>
        <location evidence="1">Cell inner membrane</location>
        <topology evidence="2">Multi-pass membrane protein</topology>
    </subcellularLocation>
</comment>
<comment type="similarity">
    <text evidence="4">Belongs to the binding-protein-dependent transport system permease family. UgpAE subfamily.</text>
</comment>
<gene>
    <name type="primary">ugpA</name>
    <name type="ordered locus">SDY_3600</name>
</gene>
<accession>Q32AT4</accession>